<dbReference type="EC" id="2.1.1.72"/>
<dbReference type="EMBL" id="X52124">
    <property type="protein sequence ID" value="CAA36369.1"/>
    <property type="molecule type" value="Genomic_DNA"/>
</dbReference>
<dbReference type="SMR" id="P17744"/>
<dbReference type="PRO" id="PR:P17744"/>
<dbReference type="GO" id="GO:0003677">
    <property type="term" value="F:DNA binding"/>
    <property type="evidence" value="ECO:0007669"/>
    <property type="project" value="UniProtKB-KW"/>
</dbReference>
<dbReference type="GO" id="GO:0008170">
    <property type="term" value="F:N-methyltransferase activity"/>
    <property type="evidence" value="ECO:0007669"/>
    <property type="project" value="InterPro"/>
</dbReference>
<dbReference type="GO" id="GO:0009007">
    <property type="term" value="F:site-specific DNA-methyltransferase (adenine-specific) activity"/>
    <property type="evidence" value="ECO:0007669"/>
    <property type="project" value="UniProtKB-EC"/>
</dbReference>
<dbReference type="GO" id="GO:0009307">
    <property type="term" value="P:DNA restriction-modification system"/>
    <property type="evidence" value="ECO:0007669"/>
    <property type="project" value="UniProtKB-KW"/>
</dbReference>
<dbReference type="GO" id="GO:0032259">
    <property type="term" value="P:methylation"/>
    <property type="evidence" value="ECO:0007669"/>
    <property type="project" value="UniProtKB-KW"/>
</dbReference>
<dbReference type="Gene3D" id="3.40.50.150">
    <property type="entry name" value="Vaccinia Virus protein VP39"/>
    <property type="match status" value="1"/>
</dbReference>
<dbReference type="InterPro" id="IPR003356">
    <property type="entry name" value="DNA_methylase_A-5"/>
</dbReference>
<dbReference type="InterPro" id="IPR002052">
    <property type="entry name" value="DNA_methylase_N6_adenine_CS"/>
</dbReference>
<dbReference type="InterPro" id="IPR011639">
    <property type="entry name" value="MethylTrfase_TaqI-like_dom"/>
</dbReference>
<dbReference type="InterPro" id="IPR050953">
    <property type="entry name" value="N4_N6_ade-DNA_methylase"/>
</dbReference>
<dbReference type="InterPro" id="IPR029063">
    <property type="entry name" value="SAM-dependent_MTases_sf"/>
</dbReference>
<dbReference type="PANTHER" id="PTHR33841">
    <property type="entry name" value="DNA METHYLTRANSFERASE YEEA-RELATED"/>
    <property type="match status" value="1"/>
</dbReference>
<dbReference type="PANTHER" id="PTHR33841:SF6">
    <property type="entry name" value="TYPE II METHYLTRANSFERASE M.HINDII"/>
    <property type="match status" value="1"/>
</dbReference>
<dbReference type="Pfam" id="PF07669">
    <property type="entry name" value="Eco57I"/>
    <property type="match status" value="1"/>
</dbReference>
<dbReference type="Pfam" id="PF02384">
    <property type="entry name" value="N6_Mtase"/>
    <property type="match status" value="1"/>
</dbReference>
<dbReference type="PRINTS" id="PR00507">
    <property type="entry name" value="N12N6MTFRASE"/>
</dbReference>
<dbReference type="SUPFAM" id="SSF53335">
    <property type="entry name" value="S-adenosyl-L-methionine-dependent methyltransferases"/>
    <property type="match status" value="1"/>
</dbReference>
<dbReference type="PROSITE" id="PS00092">
    <property type="entry name" value="N6_MTASE"/>
    <property type="match status" value="1"/>
</dbReference>
<evidence type="ECO:0000303" key="1">
    <source>
    </source>
</evidence>
<evidence type="ECO:0000303" key="2">
    <source>
    </source>
</evidence>
<evidence type="ECO:0000305" key="3"/>
<evidence type="ECO:0000305" key="4">
    <source>
    </source>
</evidence>
<proteinExistence type="inferred from homology"/>
<keyword id="KW-0238">DNA-binding</keyword>
<keyword id="KW-0489">Methyltransferase</keyword>
<keyword id="KW-0680">Restriction system</keyword>
<keyword id="KW-0949">S-adenosyl-L-methionine</keyword>
<keyword id="KW-0808">Transferase</keyword>
<accession>P17744</accession>
<comment type="function">
    <text evidence="1 4">A gamma subtype methylase that recognizes the double-stranded sequence 5'-GTYRAC-3', methylates A-5 on both strands, and protects the DNA from cleavage by the HincII endonuclease.</text>
</comment>
<comment type="catalytic activity">
    <reaction>
        <text>a 2'-deoxyadenosine in DNA + S-adenosyl-L-methionine = an N(6)-methyl-2'-deoxyadenosine in DNA + S-adenosyl-L-homocysteine + H(+)</text>
        <dbReference type="Rhea" id="RHEA:15197"/>
        <dbReference type="Rhea" id="RHEA-COMP:12418"/>
        <dbReference type="Rhea" id="RHEA-COMP:12419"/>
        <dbReference type="ChEBI" id="CHEBI:15378"/>
        <dbReference type="ChEBI" id="CHEBI:57856"/>
        <dbReference type="ChEBI" id="CHEBI:59789"/>
        <dbReference type="ChEBI" id="CHEBI:90615"/>
        <dbReference type="ChEBI" id="CHEBI:90616"/>
        <dbReference type="EC" id="2.1.1.72"/>
    </reaction>
</comment>
<comment type="similarity">
    <text evidence="3">Belongs to the N(4)/N(6)-methyltransferase family.</text>
</comment>
<protein>
    <recommendedName>
        <fullName evidence="1">Type II methyltransferase M.HincII</fullName>
        <shortName evidence="1">M.HincII</shortName>
        <ecNumber>2.1.1.72</ecNumber>
    </recommendedName>
    <alternativeName>
        <fullName>Adenine-specific methyltransferase HincII</fullName>
    </alternativeName>
    <alternativeName>
        <fullName>Modification methylase HincII</fullName>
    </alternativeName>
</protein>
<organism>
    <name type="scientific">Haemophilus influenzae</name>
    <dbReference type="NCBI Taxonomy" id="727"/>
    <lineage>
        <taxon>Bacteria</taxon>
        <taxon>Pseudomonadati</taxon>
        <taxon>Pseudomonadota</taxon>
        <taxon>Gammaproteobacteria</taxon>
        <taxon>Pasteurellales</taxon>
        <taxon>Pasteurellaceae</taxon>
        <taxon>Haemophilus</taxon>
    </lineage>
</organism>
<feature type="chain" id="PRO_0000087973" description="Type II methyltransferase M.HincII">
    <location>
        <begin position="1"/>
        <end position="502"/>
    </location>
</feature>
<sequence>MDESKKISLGQFFTPTHIVKYMIGLMTKNKNASILEPSSGNGVFLDSLIQLGYTNLTSYEIDGDIISHPFVINSSFITSYDKPQYDSIIGNPPYVRWKNLSELQKKELKDNSIWKMYCNSLCDYFYIFIIKSILQLKVGGELIFICPDYFFSTKNAEGLRKFLINNGSFEKIILFNESKVFHGVSSSVVIFKYIKGKNIDNINIINIDSKSPIKSEDIESLGESYYIPRFSSSDVWVTSPNHIKVALDKFESYCKTIKKVQQKSLFDDLSFLDKAFQMNDINYSELELLNSICVAKAKHLDAFCFSGYTRYKLILDDNNEDKLITYFPNFFYEFNNYKDYLLKRYSYNKYLPYWEVAFLRNFSLFSKNEKKIFVPCKERISKKSNFRFSLVDEFIYPTQDVTALYKKENVKESIEYITAYLNSKAVFLWMKYKGVVKGNVVEFSEKPLTNIPFRRIDWQLKSEKKIHDDITNLVRKYLSNKEFSILHEINLNLEKLGIKVEI</sequence>
<gene>
    <name evidence="2" type="primary">hincIIM</name>
</gene>
<name>MTHC_HAEIF</name>
<reference key="1">
    <citation type="journal article" date="1990" name="Nucleic Acids Res.">
        <title>Cloning, nucleotide sequence, and expression of the HincII restriction-modification system.</title>
        <authorList>
            <person name="Ito H."/>
            <person name="Sadaoka A."/>
            <person name="Kotani H."/>
            <person name="Hiraoka N."/>
            <person name="Nakamura T."/>
        </authorList>
    </citation>
    <scope>NUCLEOTIDE SEQUENCE [GENOMIC DNA]</scope>
    <scope>FUNCTION</scope>
    <source>
        <strain>RC</strain>
    </source>
</reference>
<reference key="2">
    <citation type="journal article" date="2003" name="Nucleic Acids Res.">
        <title>A nomenclature for restriction enzymes, DNA methyltransferases, homing endonucleases and their genes.</title>
        <authorList>
            <person name="Roberts R.J."/>
            <person name="Belfort M."/>
            <person name="Bestor T."/>
            <person name="Bhagwat A.S."/>
            <person name="Bickle T.A."/>
            <person name="Bitinaite J."/>
            <person name="Blumenthal R.M."/>
            <person name="Degtyarev S.K."/>
            <person name="Dryden D.T."/>
            <person name="Dybvig K."/>
            <person name="Firman K."/>
            <person name="Gromova E.S."/>
            <person name="Gumport R.I."/>
            <person name="Halford S.E."/>
            <person name="Hattman S."/>
            <person name="Heitman J."/>
            <person name="Hornby D.P."/>
            <person name="Janulaitis A."/>
            <person name="Jeltsch A."/>
            <person name="Josephsen J."/>
            <person name="Kiss A."/>
            <person name="Klaenhammer T.R."/>
            <person name="Kobayashi I."/>
            <person name="Kong H."/>
            <person name="Krueger D.H."/>
            <person name="Lacks S."/>
            <person name="Marinus M.G."/>
            <person name="Miyahara M."/>
            <person name="Morgan R.D."/>
            <person name="Murray N.E."/>
            <person name="Nagaraja V."/>
            <person name="Piekarowicz A."/>
            <person name="Pingoud A."/>
            <person name="Raleigh E."/>
            <person name="Rao D.N."/>
            <person name="Reich N."/>
            <person name="Repin V.E."/>
            <person name="Selker E.U."/>
            <person name="Shaw P.C."/>
            <person name="Stein D.C."/>
            <person name="Stoddard B.L."/>
            <person name="Szybalski W."/>
            <person name="Trautner T.A."/>
            <person name="Van Etten J.L."/>
            <person name="Vitor J.M."/>
            <person name="Wilson G.G."/>
            <person name="Xu S.Y."/>
        </authorList>
    </citation>
    <scope>NOMENCLATURE</scope>
    <scope>SUBTYPE</scope>
</reference>